<sequence length="157" mass="16412">MKPLKGCPVAKDVRVAIVGSCFNSPIADRLVAGAQETFFDFGGDPSSLTIVRVPGAFEIPCAIKKLLSTSGQFHAVVACGVLIQGETSHYEHIADSVAAGVSRLSLDFCLPITFSVITAPNMEAAWERAGIKGPNLGASGMKTALEMASLFSLIGKE</sequence>
<name>RISB_CHLTA</name>
<evidence type="ECO:0000255" key="1">
    <source>
        <dbReference type="HAMAP-Rule" id="MF_00178"/>
    </source>
</evidence>
<accession>Q3KKW2</accession>
<keyword id="KW-0686">Riboflavin biosynthesis</keyword>
<keyword id="KW-0808">Transferase</keyword>
<gene>
    <name evidence="1" type="primary">ribH</name>
    <name type="ordered locus">CTA_0794</name>
</gene>
<dbReference type="EC" id="2.5.1.78" evidence="1"/>
<dbReference type="EMBL" id="CP000051">
    <property type="protein sequence ID" value="AAX51010.1"/>
    <property type="molecule type" value="Genomic_DNA"/>
</dbReference>
<dbReference type="RefSeq" id="WP_009872109.1">
    <property type="nucleotide sequence ID" value="NC_007429.1"/>
</dbReference>
<dbReference type="SMR" id="Q3KKW2"/>
<dbReference type="KEGG" id="cta:CTA_0794"/>
<dbReference type="HOGENOM" id="CLU_089358_1_1_0"/>
<dbReference type="UniPathway" id="UPA00275">
    <property type="reaction ID" value="UER00404"/>
</dbReference>
<dbReference type="Proteomes" id="UP000002532">
    <property type="component" value="Chromosome"/>
</dbReference>
<dbReference type="GO" id="GO:0005829">
    <property type="term" value="C:cytosol"/>
    <property type="evidence" value="ECO:0007669"/>
    <property type="project" value="TreeGrafter"/>
</dbReference>
<dbReference type="GO" id="GO:0009349">
    <property type="term" value="C:riboflavin synthase complex"/>
    <property type="evidence" value="ECO:0007669"/>
    <property type="project" value="InterPro"/>
</dbReference>
<dbReference type="GO" id="GO:0000906">
    <property type="term" value="F:6,7-dimethyl-8-ribityllumazine synthase activity"/>
    <property type="evidence" value="ECO:0007669"/>
    <property type="project" value="UniProtKB-UniRule"/>
</dbReference>
<dbReference type="GO" id="GO:0009231">
    <property type="term" value="P:riboflavin biosynthetic process"/>
    <property type="evidence" value="ECO:0007669"/>
    <property type="project" value="UniProtKB-UniRule"/>
</dbReference>
<dbReference type="CDD" id="cd09209">
    <property type="entry name" value="Lumazine_synthase-I"/>
    <property type="match status" value="1"/>
</dbReference>
<dbReference type="Gene3D" id="3.40.50.960">
    <property type="entry name" value="Lumazine/riboflavin synthase"/>
    <property type="match status" value="1"/>
</dbReference>
<dbReference type="HAMAP" id="MF_00178">
    <property type="entry name" value="Lumazine_synth"/>
    <property type="match status" value="1"/>
</dbReference>
<dbReference type="InterPro" id="IPR034964">
    <property type="entry name" value="LS"/>
</dbReference>
<dbReference type="InterPro" id="IPR002180">
    <property type="entry name" value="LS/RS"/>
</dbReference>
<dbReference type="InterPro" id="IPR036467">
    <property type="entry name" value="LS/RS_sf"/>
</dbReference>
<dbReference type="NCBIfam" id="TIGR00114">
    <property type="entry name" value="lumazine-synth"/>
    <property type="match status" value="1"/>
</dbReference>
<dbReference type="PANTHER" id="PTHR21058:SF0">
    <property type="entry name" value="6,7-DIMETHYL-8-RIBITYLLUMAZINE SYNTHASE"/>
    <property type="match status" value="1"/>
</dbReference>
<dbReference type="PANTHER" id="PTHR21058">
    <property type="entry name" value="6,7-DIMETHYL-8-RIBITYLLUMAZINE SYNTHASE DMRL SYNTHASE LUMAZINE SYNTHASE"/>
    <property type="match status" value="1"/>
</dbReference>
<dbReference type="Pfam" id="PF00885">
    <property type="entry name" value="DMRL_synthase"/>
    <property type="match status" value="1"/>
</dbReference>
<dbReference type="SUPFAM" id="SSF52121">
    <property type="entry name" value="Lumazine synthase"/>
    <property type="match status" value="1"/>
</dbReference>
<proteinExistence type="inferred from homology"/>
<protein>
    <recommendedName>
        <fullName evidence="1">6,7-dimethyl-8-ribityllumazine synthase</fullName>
        <shortName evidence="1">DMRL synthase</shortName>
        <shortName evidence="1">LS</shortName>
        <shortName evidence="1">Lumazine synthase</shortName>
        <ecNumber evidence="1">2.5.1.78</ecNumber>
    </recommendedName>
</protein>
<feature type="chain" id="PRO_1000040399" description="6,7-dimethyl-8-ribityllumazine synthase">
    <location>
        <begin position="1"/>
        <end position="157"/>
    </location>
</feature>
<feature type="active site" description="Proton donor" evidence="1">
    <location>
        <position position="89"/>
    </location>
</feature>
<feature type="binding site" evidence="1">
    <location>
        <position position="22"/>
    </location>
    <ligand>
        <name>5-amino-6-(D-ribitylamino)uracil</name>
        <dbReference type="ChEBI" id="CHEBI:15934"/>
    </ligand>
</feature>
<feature type="binding site" evidence="1">
    <location>
        <begin position="56"/>
        <end position="58"/>
    </location>
    <ligand>
        <name>5-amino-6-(D-ribitylamino)uracil</name>
        <dbReference type="ChEBI" id="CHEBI:15934"/>
    </ligand>
</feature>
<feature type="binding site" evidence="1">
    <location>
        <begin position="81"/>
        <end position="83"/>
    </location>
    <ligand>
        <name>5-amino-6-(D-ribitylamino)uracil</name>
        <dbReference type="ChEBI" id="CHEBI:15934"/>
    </ligand>
</feature>
<feature type="binding site" evidence="1">
    <location>
        <begin position="86"/>
        <end position="87"/>
    </location>
    <ligand>
        <name>(2S)-2-hydroxy-3-oxobutyl phosphate</name>
        <dbReference type="ChEBI" id="CHEBI:58830"/>
    </ligand>
</feature>
<feature type="binding site" evidence="1">
    <location>
        <position position="114"/>
    </location>
    <ligand>
        <name>5-amino-6-(D-ribitylamino)uracil</name>
        <dbReference type="ChEBI" id="CHEBI:15934"/>
    </ligand>
</feature>
<feature type="binding site" evidence="1">
    <location>
        <position position="128"/>
    </location>
    <ligand>
        <name>(2S)-2-hydroxy-3-oxobutyl phosphate</name>
        <dbReference type="ChEBI" id="CHEBI:58830"/>
    </ligand>
</feature>
<comment type="function">
    <text evidence="1">Catalyzes the formation of 6,7-dimethyl-8-ribityllumazine by condensation of 5-amino-6-(D-ribitylamino)uracil with 3,4-dihydroxy-2-butanone 4-phosphate. This is the penultimate step in the biosynthesis of riboflavin.</text>
</comment>
<comment type="catalytic activity">
    <reaction evidence="1">
        <text>(2S)-2-hydroxy-3-oxobutyl phosphate + 5-amino-6-(D-ribitylamino)uracil = 6,7-dimethyl-8-(1-D-ribityl)lumazine + phosphate + 2 H2O + H(+)</text>
        <dbReference type="Rhea" id="RHEA:26152"/>
        <dbReference type="ChEBI" id="CHEBI:15377"/>
        <dbReference type="ChEBI" id="CHEBI:15378"/>
        <dbReference type="ChEBI" id="CHEBI:15934"/>
        <dbReference type="ChEBI" id="CHEBI:43474"/>
        <dbReference type="ChEBI" id="CHEBI:58201"/>
        <dbReference type="ChEBI" id="CHEBI:58830"/>
        <dbReference type="EC" id="2.5.1.78"/>
    </reaction>
</comment>
<comment type="pathway">
    <text evidence="1">Cofactor biosynthesis; riboflavin biosynthesis; riboflavin from 2-hydroxy-3-oxobutyl phosphate and 5-amino-6-(D-ribitylamino)uracil: step 1/2.</text>
</comment>
<comment type="similarity">
    <text evidence="1">Belongs to the DMRL synthase family.</text>
</comment>
<reference key="1">
    <citation type="journal article" date="2005" name="Infect. Immun.">
        <title>Comparative genomic analysis of Chlamydia trachomatis oculotropic and genitotropic strains.</title>
        <authorList>
            <person name="Carlson J.H."/>
            <person name="Porcella S.F."/>
            <person name="McClarty G."/>
            <person name="Caldwell H.D."/>
        </authorList>
    </citation>
    <scope>NUCLEOTIDE SEQUENCE [LARGE SCALE GENOMIC DNA]</scope>
    <source>
        <strain>ATCC VR-571B / DSM 19440 / HAR-13</strain>
    </source>
</reference>
<organism>
    <name type="scientific">Chlamydia trachomatis serovar A (strain ATCC VR-571B / DSM 19440 / HAR-13)</name>
    <dbReference type="NCBI Taxonomy" id="315277"/>
    <lineage>
        <taxon>Bacteria</taxon>
        <taxon>Pseudomonadati</taxon>
        <taxon>Chlamydiota</taxon>
        <taxon>Chlamydiia</taxon>
        <taxon>Chlamydiales</taxon>
        <taxon>Chlamydiaceae</taxon>
        <taxon>Chlamydia/Chlamydophila group</taxon>
        <taxon>Chlamydia</taxon>
    </lineage>
</organism>